<name>RSMG_STAAS</name>
<organism>
    <name type="scientific">Staphylococcus aureus (strain MSSA476)</name>
    <dbReference type="NCBI Taxonomy" id="282459"/>
    <lineage>
        <taxon>Bacteria</taxon>
        <taxon>Bacillati</taxon>
        <taxon>Bacillota</taxon>
        <taxon>Bacilli</taxon>
        <taxon>Bacillales</taxon>
        <taxon>Staphylococcaceae</taxon>
        <taxon>Staphylococcus</taxon>
    </lineage>
</organism>
<sequence>MTVEWLAEQLKEHNIQLTETQKQQFQTYYRLLVEWNEKMNLTSITDEHDVYLKHFYDSIAPSFYFDFNQPISICDVGAGAGFPSIPLKIMFPQLKVTIVDSLNKRIQFLNHLASELQLQDVSFIHDRAETFGKGVYRESYDVVTARAVARLSVLSELCLPLVKKGGQFVALKSSKGEEELEEAKFAISVLGGNVTETHTFELPEDAGERQMFIIDKKRQTPKKYPRKPGTPNKTPLLEK</sequence>
<feature type="chain" id="PRO_0000184330" description="Ribosomal RNA small subunit methyltransferase G">
    <location>
        <begin position="1"/>
        <end position="239"/>
    </location>
</feature>
<feature type="region of interest" description="Disordered" evidence="2">
    <location>
        <begin position="215"/>
        <end position="239"/>
    </location>
</feature>
<feature type="binding site" evidence="1">
    <location>
        <position position="77"/>
    </location>
    <ligand>
        <name>S-adenosyl-L-methionine</name>
        <dbReference type="ChEBI" id="CHEBI:59789"/>
    </ligand>
</feature>
<feature type="binding site" evidence="1">
    <location>
        <position position="82"/>
    </location>
    <ligand>
        <name>S-adenosyl-L-methionine</name>
        <dbReference type="ChEBI" id="CHEBI:59789"/>
    </ligand>
</feature>
<feature type="binding site" evidence="1">
    <location>
        <begin position="128"/>
        <end position="129"/>
    </location>
    <ligand>
        <name>S-adenosyl-L-methionine</name>
        <dbReference type="ChEBI" id="CHEBI:59789"/>
    </ligand>
</feature>
<feature type="binding site" evidence="1">
    <location>
        <position position="146"/>
    </location>
    <ligand>
        <name>S-adenosyl-L-methionine</name>
        <dbReference type="ChEBI" id="CHEBI:59789"/>
    </ligand>
</feature>
<reference key="1">
    <citation type="journal article" date="2004" name="Proc. Natl. Acad. Sci. U.S.A.">
        <title>Complete genomes of two clinical Staphylococcus aureus strains: evidence for the rapid evolution of virulence and drug resistance.</title>
        <authorList>
            <person name="Holden M.T.G."/>
            <person name="Feil E.J."/>
            <person name="Lindsay J.A."/>
            <person name="Peacock S.J."/>
            <person name="Day N.P.J."/>
            <person name="Enright M.C."/>
            <person name="Foster T.J."/>
            <person name="Moore C.E."/>
            <person name="Hurst L."/>
            <person name="Atkin R."/>
            <person name="Barron A."/>
            <person name="Bason N."/>
            <person name="Bentley S.D."/>
            <person name="Chillingworth C."/>
            <person name="Chillingworth T."/>
            <person name="Churcher C."/>
            <person name="Clark L."/>
            <person name="Corton C."/>
            <person name="Cronin A."/>
            <person name="Doggett J."/>
            <person name="Dowd L."/>
            <person name="Feltwell T."/>
            <person name="Hance Z."/>
            <person name="Harris B."/>
            <person name="Hauser H."/>
            <person name="Holroyd S."/>
            <person name="Jagels K."/>
            <person name="James K.D."/>
            <person name="Lennard N."/>
            <person name="Line A."/>
            <person name="Mayes R."/>
            <person name="Moule S."/>
            <person name="Mungall K."/>
            <person name="Ormond D."/>
            <person name="Quail M.A."/>
            <person name="Rabbinowitsch E."/>
            <person name="Rutherford K.M."/>
            <person name="Sanders M."/>
            <person name="Sharp S."/>
            <person name="Simmonds M."/>
            <person name="Stevens K."/>
            <person name="Whitehead S."/>
            <person name="Barrell B.G."/>
            <person name="Spratt B.G."/>
            <person name="Parkhill J."/>
        </authorList>
    </citation>
    <scope>NUCLEOTIDE SEQUENCE [LARGE SCALE GENOMIC DNA]</scope>
    <source>
        <strain>MSSA476</strain>
    </source>
</reference>
<proteinExistence type="inferred from homology"/>
<comment type="function">
    <text evidence="1">Specifically methylates the N7 position of guanine in position 535 of 16S rRNA.</text>
</comment>
<comment type="subcellular location">
    <subcellularLocation>
        <location evidence="1">Cytoplasm</location>
    </subcellularLocation>
</comment>
<comment type="similarity">
    <text evidence="1">Belongs to the methyltransferase superfamily. RNA methyltransferase RsmG family.</text>
</comment>
<gene>
    <name evidence="1" type="primary">rsmG</name>
    <name type="ordered locus">SAS2592</name>
</gene>
<keyword id="KW-0963">Cytoplasm</keyword>
<keyword id="KW-0489">Methyltransferase</keyword>
<keyword id="KW-0698">rRNA processing</keyword>
<keyword id="KW-0949">S-adenosyl-L-methionine</keyword>
<keyword id="KW-0808">Transferase</keyword>
<protein>
    <recommendedName>
        <fullName evidence="1">Ribosomal RNA small subunit methyltransferase G</fullName>
        <ecNumber evidence="1">2.1.1.-</ecNumber>
    </recommendedName>
    <alternativeName>
        <fullName evidence="1">16S rRNA 7-methylguanosine methyltransferase</fullName>
        <shortName evidence="1">16S rRNA m7G methyltransferase</shortName>
    </alternativeName>
</protein>
<evidence type="ECO:0000255" key="1">
    <source>
        <dbReference type="HAMAP-Rule" id="MF_00074"/>
    </source>
</evidence>
<evidence type="ECO:0000256" key="2">
    <source>
        <dbReference type="SAM" id="MobiDB-lite"/>
    </source>
</evidence>
<dbReference type="EC" id="2.1.1.-" evidence="1"/>
<dbReference type="EMBL" id="BX571857">
    <property type="protein sequence ID" value="CAG44411.1"/>
    <property type="molecule type" value="Genomic_DNA"/>
</dbReference>
<dbReference type="RefSeq" id="WP_000215595.1">
    <property type="nucleotide sequence ID" value="NC_002953.3"/>
</dbReference>
<dbReference type="SMR" id="Q6G5W6"/>
<dbReference type="KEGG" id="sas:SAS2592"/>
<dbReference type="HOGENOM" id="CLU_065341_0_0_9"/>
<dbReference type="GO" id="GO:0005829">
    <property type="term" value="C:cytosol"/>
    <property type="evidence" value="ECO:0007669"/>
    <property type="project" value="TreeGrafter"/>
</dbReference>
<dbReference type="GO" id="GO:0070043">
    <property type="term" value="F:rRNA (guanine-N7-)-methyltransferase activity"/>
    <property type="evidence" value="ECO:0007669"/>
    <property type="project" value="UniProtKB-UniRule"/>
</dbReference>
<dbReference type="CDD" id="cd02440">
    <property type="entry name" value="AdoMet_MTases"/>
    <property type="match status" value="1"/>
</dbReference>
<dbReference type="FunFam" id="3.40.50.150:FF:000041">
    <property type="entry name" value="Ribosomal RNA small subunit methyltransferase G"/>
    <property type="match status" value="1"/>
</dbReference>
<dbReference type="Gene3D" id="3.40.50.150">
    <property type="entry name" value="Vaccinia Virus protein VP39"/>
    <property type="match status" value="1"/>
</dbReference>
<dbReference type="HAMAP" id="MF_00074">
    <property type="entry name" value="16SrRNA_methyltr_G"/>
    <property type="match status" value="1"/>
</dbReference>
<dbReference type="InterPro" id="IPR003682">
    <property type="entry name" value="rRNA_ssu_MeTfrase_G"/>
</dbReference>
<dbReference type="InterPro" id="IPR029063">
    <property type="entry name" value="SAM-dependent_MTases_sf"/>
</dbReference>
<dbReference type="NCBIfam" id="TIGR00138">
    <property type="entry name" value="rsmG_gidB"/>
    <property type="match status" value="1"/>
</dbReference>
<dbReference type="PANTHER" id="PTHR31760">
    <property type="entry name" value="S-ADENOSYL-L-METHIONINE-DEPENDENT METHYLTRANSFERASES SUPERFAMILY PROTEIN"/>
    <property type="match status" value="1"/>
</dbReference>
<dbReference type="PANTHER" id="PTHR31760:SF0">
    <property type="entry name" value="S-ADENOSYL-L-METHIONINE-DEPENDENT METHYLTRANSFERASES SUPERFAMILY PROTEIN"/>
    <property type="match status" value="1"/>
</dbReference>
<dbReference type="Pfam" id="PF02527">
    <property type="entry name" value="GidB"/>
    <property type="match status" value="1"/>
</dbReference>
<dbReference type="PIRSF" id="PIRSF003078">
    <property type="entry name" value="GidB"/>
    <property type="match status" value="1"/>
</dbReference>
<dbReference type="SUPFAM" id="SSF53335">
    <property type="entry name" value="S-adenosyl-L-methionine-dependent methyltransferases"/>
    <property type="match status" value="1"/>
</dbReference>
<accession>Q6G5W6</accession>